<comment type="function">
    <text>Produces ATP from ADP in the presence of a sodium ion gradient across the membrane. The alpha chain is a regulatory subunit.</text>
</comment>
<comment type="catalytic activity">
    <reaction>
        <text>4 Na(+)(in) + ATP + H2O = 4 Na(+)(out) + ADP + phosphate + H(+)</text>
        <dbReference type="Rhea" id="RHEA:58156"/>
        <dbReference type="ChEBI" id="CHEBI:15377"/>
        <dbReference type="ChEBI" id="CHEBI:15378"/>
        <dbReference type="ChEBI" id="CHEBI:29101"/>
        <dbReference type="ChEBI" id="CHEBI:30616"/>
        <dbReference type="ChEBI" id="CHEBI:43474"/>
        <dbReference type="ChEBI" id="CHEBI:456216"/>
        <dbReference type="EC" id="7.2.2.1"/>
    </reaction>
</comment>
<comment type="subunit">
    <text>F-type ATPases have 2 components, CF(1) - the catalytic core - and CF(0) - the membrane proton channel. CF(1) has five subunits: alpha(3), beta(3), gamma(1), delta(1), epsilon(1). CF(0) has three main subunits: a, b and c.</text>
</comment>
<comment type="subcellular location">
    <subcellularLocation>
        <location evidence="1">Cell membrane</location>
        <topology evidence="1">Peripheral membrane protein</topology>
    </subcellularLocation>
</comment>
<comment type="miscellaneous">
    <text>The ATPase of P.modestum is of special interest because it uses sodium ions instead of protons as the physiological coupling ion.</text>
</comment>
<comment type="similarity">
    <text evidence="1">Belongs to the ATPase alpha/beta chains family.</text>
</comment>
<comment type="sequence caution" evidence="2">
    <conflict type="frameshift">
        <sequence resource="EMBL-CDS" id="CAA41372"/>
    </conflict>
</comment>
<keyword id="KW-0066">ATP synthesis</keyword>
<keyword id="KW-0067">ATP-binding</keyword>
<keyword id="KW-1003">Cell membrane</keyword>
<keyword id="KW-0139">CF(1)</keyword>
<keyword id="KW-0903">Direct protein sequencing</keyword>
<keyword id="KW-0406">Ion transport</keyword>
<keyword id="KW-0472">Membrane</keyword>
<keyword id="KW-0547">Nucleotide-binding</keyword>
<keyword id="KW-0915">Sodium</keyword>
<keyword id="KW-0739">Sodium transport</keyword>
<keyword id="KW-1278">Translocase</keyword>
<keyword id="KW-0813">Transport</keyword>
<dbReference type="EC" id="7.2.2.1"/>
<dbReference type="EMBL" id="X58461">
    <property type="protein sequence ID" value="CAA41372.1"/>
    <property type="status" value="ALT_FRAME"/>
    <property type="molecule type" value="Genomic_DNA"/>
</dbReference>
<dbReference type="EMBL" id="X66103">
    <property type="protein sequence ID" value="CAA46898.1"/>
    <property type="status" value="ALT_SEQ"/>
    <property type="molecule type" value="Genomic_DNA"/>
</dbReference>
<dbReference type="PIR" id="S29039">
    <property type="entry name" value="S29039"/>
</dbReference>
<dbReference type="SMR" id="P29706"/>
<dbReference type="TCDB" id="3.A.2.1.2">
    <property type="family name" value="the h+- or na+-translocating f-type, v-type and a-type atpase (f-atpase) superfamily"/>
</dbReference>
<dbReference type="GO" id="GO:0005886">
    <property type="term" value="C:plasma membrane"/>
    <property type="evidence" value="ECO:0007669"/>
    <property type="project" value="UniProtKB-SubCell"/>
</dbReference>
<dbReference type="GO" id="GO:0045259">
    <property type="term" value="C:proton-transporting ATP synthase complex"/>
    <property type="evidence" value="ECO:0007669"/>
    <property type="project" value="UniProtKB-KW"/>
</dbReference>
<dbReference type="GO" id="GO:0043531">
    <property type="term" value="F:ADP binding"/>
    <property type="evidence" value="ECO:0007669"/>
    <property type="project" value="TreeGrafter"/>
</dbReference>
<dbReference type="GO" id="GO:0005524">
    <property type="term" value="F:ATP binding"/>
    <property type="evidence" value="ECO:0007669"/>
    <property type="project" value="UniProtKB-UniRule"/>
</dbReference>
<dbReference type="GO" id="GO:0046933">
    <property type="term" value="F:proton-transporting ATP synthase activity, rotational mechanism"/>
    <property type="evidence" value="ECO:0007669"/>
    <property type="project" value="UniProtKB-UniRule"/>
</dbReference>
<dbReference type="GO" id="GO:0046962">
    <property type="term" value="F:sodium-transporting ATPase activity, rotational mechanism"/>
    <property type="evidence" value="ECO:0007669"/>
    <property type="project" value="UniProtKB-EC"/>
</dbReference>
<dbReference type="CDD" id="cd18113">
    <property type="entry name" value="ATP-synt_F1_alpha_C"/>
    <property type="match status" value="1"/>
</dbReference>
<dbReference type="CDD" id="cd18116">
    <property type="entry name" value="ATP-synt_F1_alpha_N"/>
    <property type="match status" value="1"/>
</dbReference>
<dbReference type="CDD" id="cd01132">
    <property type="entry name" value="F1-ATPase_alpha_CD"/>
    <property type="match status" value="1"/>
</dbReference>
<dbReference type="FunFam" id="1.20.150.20:FF:000001">
    <property type="entry name" value="ATP synthase subunit alpha"/>
    <property type="match status" value="1"/>
</dbReference>
<dbReference type="FunFam" id="2.40.30.20:FF:000001">
    <property type="entry name" value="ATP synthase subunit alpha"/>
    <property type="match status" value="1"/>
</dbReference>
<dbReference type="FunFam" id="3.40.50.300:FF:000002">
    <property type="entry name" value="ATP synthase subunit alpha"/>
    <property type="match status" value="1"/>
</dbReference>
<dbReference type="Gene3D" id="2.40.30.20">
    <property type="match status" value="1"/>
</dbReference>
<dbReference type="Gene3D" id="1.20.150.20">
    <property type="entry name" value="ATP synthase alpha/beta chain, C-terminal domain"/>
    <property type="match status" value="1"/>
</dbReference>
<dbReference type="Gene3D" id="3.40.50.300">
    <property type="entry name" value="P-loop containing nucleotide triphosphate hydrolases"/>
    <property type="match status" value="1"/>
</dbReference>
<dbReference type="HAMAP" id="MF_01346">
    <property type="entry name" value="ATP_synth_alpha_bact"/>
    <property type="match status" value="1"/>
</dbReference>
<dbReference type="InterPro" id="IPR023366">
    <property type="entry name" value="ATP_synth_asu-like_sf"/>
</dbReference>
<dbReference type="InterPro" id="IPR000793">
    <property type="entry name" value="ATP_synth_asu_C"/>
</dbReference>
<dbReference type="InterPro" id="IPR038376">
    <property type="entry name" value="ATP_synth_asu_C_sf"/>
</dbReference>
<dbReference type="InterPro" id="IPR033732">
    <property type="entry name" value="ATP_synth_F1_a_nt-bd_dom"/>
</dbReference>
<dbReference type="InterPro" id="IPR005294">
    <property type="entry name" value="ATP_synth_F1_asu"/>
</dbReference>
<dbReference type="InterPro" id="IPR020003">
    <property type="entry name" value="ATPase_a/bsu_AS"/>
</dbReference>
<dbReference type="InterPro" id="IPR004100">
    <property type="entry name" value="ATPase_F1/V1/A1_a/bsu_N"/>
</dbReference>
<dbReference type="InterPro" id="IPR036121">
    <property type="entry name" value="ATPase_F1/V1/A1_a/bsu_N_sf"/>
</dbReference>
<dbReference type="InterPro" id="IPR000194">
    <property type="entry name" value="ATPase_F1/V1/A1_a/bsu_nucl-bd"/>
</dbReference>
<dbReference type="InterPro" id="IPR027417">
    <property type="entry name" value="P-loop_NTPase"/>
</dbReference>
<dbReference type="NCBIfam" id="TIGR00962">
    <property type="entry name" value="atpA"/>
    <property type="match status" value="1"/>
</dbReference>
<dbReference type="NCBIfam" id="NF009884">
    <property type="entry name" value="PRK13343.1"/>
    <property type="match status" value="1"/>
</dbReference>
<dbReference type="PANTHER" id="PTHR48082">
    <property type="entry name" value="ATP SYNTHASE SUBUNIT ALPHA, MITOCHONDRIAL"/>
    <property type="match status" value="1"/>
</dbReference>
<dbReference type="PANTHER" id="PTHR48082:SF2">
    <property type="entry name" value="ATP SYNTHASE SUBUNIT ALPHA, MITOCHONDRIAL"/>
    <property type="match status" value="1"/>
</dbReference>
<dbReference type="Pfam" id="PF00006">
    <property type="entry name" value="ATP-synt_ab"/>
    <property type="match status" value="1"/>
</dbReference>
<dbReference type="Pfam" id="PF00306">
    <property type="entry name" value="ATP-synt_ab_C"/>
    <property type="match status" value="1"/>
</dbReference>
<dbReference type="Pfam" id="PF02874">
    <property type="entry name" value="ATP-synt_ab_N"/>
    <property type="match status" value="1"/>
</dbReference>
<dbReference type="PIRSF" id="PIRSF039088">
    <property type="entry name" value="F_ATPase_subunit_alpha"/>
    <property type="match status" value="1"/>
</dbReference>
<dbReference type="SUPFAM" id="SSF47917">
    <property type="entry name" value="C-terminal domain of alpha and beta subunits of F1 ATP synthase"/>
    <property type="match status" value="1"/>
</dbReference>
<dbReference type="SUPFAM" id="SSF50615">
    <property type="entry name" value="N-terminal domain of alpha and beta subunits of F1 ATP synthase"/>
    <property type="match status" value="1"/>
</dbReference>
<dbReference type="SUPFAM" id="SSF52540">
    <property type="entry name" value="P-loop containing nucleoside triphosphate hydrolases"/>
    <property type="match status" value="1"/>
</dbReference>
<dbReference type="PROSITE" id="PS00152">
    <property type="entry name" value="ATPASE_ALPHA_BETA"/>
    <property type="match status" value="1"/>
</dbReference>
<reference key="1">
    <citation type="submission" date="1991-03" db="EMBL/GenBank/DDBJ databases">
        <authorList>
            <person name="Krumholz L.R."/>
            <person name="Esser U."/>
            <person name="Simoni R.D."/>
        </authorList>
    </citation>
    <scope>NUCLEOTIDE SEQUENCE [GENOMIC DNA]</scope>
    <source>
        <strain>DSM 2376 / Gra Succ2</strain>
    </source>
</reference>
<reference key="2">
    <citation type="journal article" date="1992" name="Eur. J. Biochem.">
        <title>Cloning, sequencing and in vivo expression of genes encoding the F0 part of the sodium-ion-dependent ATP synthase of Propionigenium modestum in Escherichia coli.</title>
        <authorList>
            <person name="Kaim G.W."/>
            <person name="Ludwig W."/>
            <person name="Dimroth P."/>
            <person name="Schleifer K.H."/>
        </authorList>
    </citation>
    <scope>NUCLEOTIDE SEQUENCE [GENOMIC DNA] OF 140-269</scope>
    <source>
        <strain>DSM 2376 / Gra Succ2</strain>
    </source>
</reference>
<reference key="3">
    <citation type="journal article" date="1995" name="Eur. J. Biochem.">
        <title>In vivo synthesis of ATPase complexes of Propionigenium modestum and Escherichia coli and analysis of their function.</title>
        <authorList>
            <person name="Gerike U."/>
            <person name="Kaim G.W."/>
            <person name="Dimroth P."/>
        </authorList>
    </citation>
    <scope>SEQUENCE REVISION TO 466-500</scope>
</reference>
<reference key="4">
    <citation type="journal article" date="1993" name="FEBS Lett.">
        <title>N-terminal amino acid sequences of the subunits of the Na(+)-translocating F1F0 ATPase from Propionigenium modestum.</title>
        <authorList>
            <person name="Gerike U."/>
            <person name="Dimroth P."/>
        </authorList>
    </citation>
    <scope>PROTEIN SEQUENCE OF 1-7</scope>
</reference>
<proteinExistence type="evidence at protein level"/>
<organism>
    <name type="scientific">Propionigenium modestum</name>
    <dbReference type="NCBI Taxonomy" id="2333"/>
    <lineage>
        <taxon>Bacteria</taxon>
        <taxon>Fusobacteriati</taxon>
        <taxon>Fusobacteriota</taxon>
        <taxon>Fusobacteriia</taxon>
        <taxon>Fusobacteriales</taxon>
        <taxon>Fusobacteriaceae</taxon>
        <taxon>Propionigenium</taxon>
    </lineage>
</organism>
<accession>P29706</accession>
<evidence type="ECO:0000255" key="1">
    <source>
        <dbReference type="HAMAP-Rule" id="MF_01346"/>
    </source>
</evidence>
<evidence type="ECO:0000305" key="2"/>
<gene>
    <name evidence="1" type="primary">atpA</name>
    <name type="synonym">uncA</name>
</gene>
<protein>
    <recommendedName>
        <fullName>ATP synthase subunit alpha, sodium ion specific</fullName>
        <ecNumber>7.2.2.1</ecNumber>
    </recommendedName>
    <alternativeName>
        <fullName>Na(+)-translocating ATPase subunit alpha</fullName>
    </alternativeName>
</protein>
<feature type="chain" id="PRO_0000144343" description="ATP synthase subunit alpha, sodium ion specific">
    <location>
        <begin position="1"/>
        <end position="500"/>
    </location>
</feature>
<feature type="binding site" evidence="1">
    <location>
        <begin position="169"/>
        <end position="176"/>
    </location>
    <ligand>
        <name>ATP</name>
        <dbReference type="ChEBI" id="CHEBI:30616"/>
    </ligand>
</feature>
<feature type="site" description="Required for activity" evidence="1">
    <location>
        <position position="362"/>
    </location>
</feature>
<feature type="sequence conflict" description="In Ref. 2; CAA46898." evidence="2" ref="2">
    <original>I</original>
    <variation>Y</variation>
    <location>
        <position position="150"/>
    </location>
</feature>
<sequence>MKIRPEEISGIIKTEIENYKKSLDVKTSGSVVQVGDGIARIYGLSNAKAGELLEFPNGITGMALNLEENNVGAVILGDPTGVKEGDEVRATGQIAAVGAGEALLGRVVNSLGEPIDGKGELKTEKMMPLDRKAYGIISRKPVHEPLQTGIKSIDGMVPIGRGQRELIIGDRQTGKTAVALDAIINQKDTGVKCIYVAIGQKRSTVAQIVKRLEDAGALEYTIVVAATASESAPLQYMAPYTGVSMGEYFMDKGEHVLIVYDDLSKHAVAYREMSLLLKRPPGREAFPGDVFYLHSRLLERAAKLSDEIGAGSITALPIIETQAGDVSAYIPTNVISITDGQIFLDSQLFNSGFRPAINAGISVSRVGGAAQIKAMKQVAAQVKLELAQYNELLTFAQFGSDLDKATLAQLERGHRIMEILKQEQYKPFVVEEQVVSFFTVINGYLDDIAIDQVRRFEKELLEELKDNTTILAEIVEKKAIKEDLDAKLRKAIEDFKKKFS</sequence>
<name>ATPA_PROMO</name>